<proteinExistence type="inferred from homology"/>
<accession>Q8ZUR9</accession>
<reference key="1">
    <citation type="journal article" date="2002" name="Proc. Natl. Acad. Sci. U.S.A.">
        <title>Genome sequence of the hyperthermophilic crenarchaeon Pyrobaculum aerophilum.</title>
        <authorList>
            <person name="Fitz-Gibbon S.T."/>
            <person name="Ladner H."/>
            <person name="Kim U.-J."/>
            <person name="Stetter K.O."/>
            <person name="Simon M.I."/>
            <person name="Miller J.H."/>
        </authorList>
    </citation>
    <scope>NUCLEOTIDE SEQUENCE [LARGE SCALE GENOMIC DNA]</scope>
    <source>
        <strain>ATCC 51768 / DSM 7523 / JCM 9630 / CIP 104966 / NBRC 100827 / IM2</strain>
    </source>
</reference>
<keyword id="KW-0004">4Fe-4S</keyword>
<keyword id="KW-0963">Cytoplasm</keyword>
<keyword id="KW-0408">Iron</keyword>
<keyword id="KW-0411">Iron-sulfur</keyword>
<keyword id="KW-0479">Metal-binding</keyword>
<keyword id="KW-1185">Reference proteome</keyword>
<keyword id="KW-0949">S-adenosyl-L-methionine</keyword>
<keyword id="KW-0808">Transferase</keyword>
<comment type="function">
    <text evidence="1">Catalyzes the radical-mediated insertion of two sulfur atoms into the C-6 and C-8 positions of the octanoyl moiety bound to the lipoyl domains of lipoate-dependent enzymes, thereby converting the octanoylated domains into lipoylated derivatives.</text>
</comment>
<comment type="catalytic activity">
    <reaction evidence="1">
        <text>[[Fe-S] cluster scaffold protein carrying a second [4Fe-4S](2+) cluster] + N(6)-octanoyl-L-lysyl-[protein] + 2 oxidized [2Fe-2S]-[ferredoxin] + 2 S-adenosyl-L-methionine + 4 H(+) = [[Fe-S] cluster scaffold protein] + N(6)-[(R)-dihydrolipoyl]-L-lysyl-[protein] + 4 Fe(3+) + 2 hydrogen sulfide + 2 5'-deoxyadenosine + 2 L-methionine + 2 reduced [2Fe-2S]-[ferredoxin]</text>
        <dbReference type="Rhea" id="RHEA:16585"/>
        <dbReference type="Rhea" id="RHEA-COMP:9928"/>
        <dbReference type="Rhea" id="RHEA-COMP:10000"/>
        <dbReference type="Rhea" id="RHEA-COMP:10001"/>
        <dbReference type="Rhea" id="RHEA-COMP:10475"/>
        <dbReference type="Rhea" id="RHEA-COMP:14568"/>
        <dbReference type="Rhea" id="RHEA-COMP:14569"/>
        <dbReference type="ChEBI" id="CHEBI:15378"/>
        <dbReference type="ChEBI" id="CHEBI:17319"/>
        <dbReference type="ChEBI" id="CHEBI:29034"/>
        <dbReference type="ChEBI" id="CHEBI:29919"/>
        <dbReference type="ChEBI" id="CHEBI:33722"/>
        <dbReference type="ChEBI" id="CHEBI:33737"/>
        <dbReference type="ChEBI" id="CHEBI:33738"/>
        <dbReference type="ChEBI" id="CHEBI:57844"/>
        <dbReference type="ChEBI" id="CHEBI:59789"/>
        <dbReference type="ChEBI" id="CHEBI:78809"/>
        <dbReference type="ChEBI" id="CHEBI:83100"/>
        <dbReference type="EC" id="2.8.1.8"/>
    </reaction>
</comment>
<comment type="cofactor">
    <cofactor evidence="1">
        <name>[4Fe-4S] cluster</name>
        <dbReference type="ChEBI" id="CHEBI:49883"/>
    </cofactor>
    <text evidence="1">Binds 2 [4Fe-4S] clusters per subunit. One cluster is coordinated with 3 cysteines and an exchangeable S-adenosyl-L-methionine.</text>
</comment>
<comment type="pathway">
    <text evidence="1">Protein modification; protein lipoylation via endogenous pathway; protein N(6)-(lipoyl)lysine from octanoyl-[acyl-carrier-protein]: step 2/2.</text>
</comment>
<comment type="subcellular location">
    <subcellularLocation>
        <location evidence="1">Cytoplasm</location>
    </subcellularLocation>
</comment>
<comment type="similarity">
    <text evidence="1">Belongs to the radical SAM superfamily. Lipoyl synthase family.</text>
</comment>
<gene>
    <name evidence="1" type="primary">lipA</name>
    <name type="ordered locus">PAE2643</name>
</gene>
<evidence type="ECO:0000255" key="1">
    <source>
        <dbReference type="HAMAP-Rule" id="MF_00206"/>
    </source>
</evidence>
<evidence type="ECO:0000255" key="2">
    <source>
        <dbReference type="PROSITE-ProRule" id="PRU01266"/>
    </source>
</evidence>
<organism>
    <name type="scientific">Pyrobaculum aerophilum (strain ATCC 51768 / DSM 7523 / JCM 9630 / CIP 104966 / NBRC 100827 / IM2)</name>
    <dbReference type="NCBI Taxonomy" id="178306"/>
    <lineage>
        <taxon>Archaea</taxon>
        <taxon>Thermoproteota</taxon>
        <taxon>Thermoprotei</taxon>
        <taxon>Thermoproteales</taxon>
        <taxon>Thermoproteaceae</taxon>
        <taxon>Pyrobaculum</taxon>
    </lineage>
</organism>
<dbReference type="EC" id="2.8.1.8" evidence="1"/>
<dbReference type="EMBL" id="AE009441">
    <property type="protein sequence ID" value="AAL64337.1"/>
    <property type="molecule type" value="Genomic_DNA"/>
</dbReference>
<dbReference type="RefSeq" id="WP_011008805.1">
    <property type="nucleotide sequence ID" value="NC_003364.1"/>
</dbReference>
<dbReference type="SMR" id="Q8ZUR9"/>
<dbReference type="FunCoup" id="Q8ZUR9">
    <property type="interactions" value="214"/>
</dbReference>
<dbReference type="STRING" id="178306.PAE2643"/>
<dbReference type="EnsemblBacteria" id="AAL64337">
    <property type="protein sequence ID" value="AAL64337"/>
    <property type="gene ID" value="PAE2643"/>
</dbReference>
<dbReference type="GeneID" id="1464678"/>
<dbReference type="KEGG" id="pai:PAE2643"/>
<dbReference type="PATRIC" id="fig|178306.9.peg.1969"/>
<dbReference type="eggNOG" id="arCOG00660">
    <property type="taxonomic scope" value="Archaea"/>
</dbReference>
<dbReference type="HOGENOM" id="CLU_033144_2_1_2"/>
<dbReference type="InParanoid" id="Q8ZUR9"/>
<dbReference type="UniPathway" id="UPA00538">
    <property type="reaction ID" value="UER00593"/>
</dbReference>
<dbReference type="Proteomes" id="UP000002439">
    <property type="component" value="Chromosome"/>
</dbReference>
<dbReference type="GO" id="GO:0005737">
    <property type="term" value="C:cytoplasm"/>
    <property type="evidence" value="ECO:0007669"/>
    <property type="project" value="UniProtKB-SubCell"/>
</dbReference>
<dbReference type="GO" id="GO:0051539">
    <property type="term" value="F:4 iron, 4 sulfur cluster binding"/>
    <property type="evidence" value="ECO:0007669"/>
    <property type="project" value="UniProtKB-UniRule"/>
</dbReference>
<dbReference type="GO" id="GO:0016992">
    <property type="term" value="F:lipoate synthase activity"/>
    <property type="evidence" value="ECO:0007669"/>
    <property type="project" value="UniProtKB-UniRule"/>
</dbReference>
<dbReference type="GO" id="GO:0046872">
    <property type="term" value="F:metal ion binding"/>
    <property type="evidence" value="ECO:0007669"/>
    <property type="project" value="UniProtKB-KW"/>
</dbReference>
<dbReference type="CDD" id="cd01335">
    <property type="entry name" value="Radical_SAM"/>
    <property type="match status" value="1"/>
</dbReference>
<dbReference type="Gene3D" id="3.20.20.70">
    <property type="entry name" value="Aldolase class I"/>
    <property type="match status" value="1"/>
</dbReference>
<dbReference type="HAMAP" id="MF_00206">
    <property type="entry name" value="Lipoyl_synth"/>
    <property type="match status" value="1"/>
</dbReference>
<dbReference type="InterPro" id="IPR013785">
    <property type="entry name" value="Aldolase_TIM"/>
</dbReference>
<dbReference type="InterPro" id="IPR006638">
    <property type="entry name" value="Elp3/MiaA/NifB-like_rSAM"/>
</dbReference>
<dbReference type="InterPro" id="IPR003698">
    <property type="entry name" value="Lipoyl_synth"/>
</dbReference>
<dbReference type="InterPro" id="IPR007197">
    <property type="entry name" value="rSAM"/>
</dbReference>
<dbReference type="NCBIfam" id="TIGR00510">
    <property type="entry name" value="lipA"/>
    <property type="match status" value="1"/>
</dbReference>
<dbReference type="NCBIfam" id="NF004019">
    <property type="entry name" value="PRK05481.1"/>
    <property type="match status" value="1"/>
</dbReference>
<dbReference type="NCBIfam" id="NF009544">
    <property type="entry name" value="PRK12928.1"/>
    <property type="match status" value="1"/>
</dbReference>
<dbReference type="PANTHER" id="PTHR10949">
    <property type="entry name" value="LIPOYL SYNTHASE"/>
    <property type="match status" value="1"/>
</dbReference>
<dbReference type="PANTHER" id="PTHR10949:SF0">
    <property type="entry name" value="LIPOYL SYNTHASE, MITOCHONDRIAL"/>
    <property type="match status" value="1"/>
</dbReference>
<dbReference type="Pfam" id="PF04055">
    <property type="entry name" value="Radical_SAM"/>
    <property type="match status" value="1"/>
</dbReference>
<dbReference type="PIRSF" id="PIRSF005963">
    <property type="entry name" value="Lipoyl_synth"/>
    <property type="match status" value="1"/>
</dbReference>
<dbReference type="SFLD" id="SFLDF00271">
    <property type="entry name" value="lipoyl_synthase"/>
    <property type="match status" value="1"/>
</dbReference>
<dbReference type="SFLD" id="SFLDG01058">
    <property type="entry name" value="lipoyl_synthase_like"/>
    <property type="match status" value="1"/>
</dbReference>
<dbReference type="SMART" id="SM00729">
    <property type="entry name" value="Elp3"/>
    <property type="match status" value="1"/>
</dbReference>
<dbReference type="SUPFAM" id="SSF102114">
    <property type="entry name" value="Radical SAM enzymes"/>
    <property type="match status" value="1"/>
</dbReference>
<dbReference type="PROSITE" id="PS51918">
    <property type="entry name" value="RADICAL_SAM"/>
    <property type="match status" value="1"/>
</dbReference>
<name>LIPA_PYRAE</name>
<sequence length="290" mass="31806">MIPSWVSLRAGDYEKIINVRRALSRHGIYTVCEGAKCPNIFHCWGEGTATFMILGEVCTRACRFCAVRTGNPRGYVDWGEVDRLVEAVRELGLKYVVVTSVARDDLPDGGASVFAAVVKKLREVGCVVEVLVPDFGGSPASVKTVVSSGPDVFAHNVETVRRLTPLVRDRRAGYERSLSVLKYAKEFGAPLTKSGLMLGLGETFEEVVETLEDLRRADVDIVTIGQYIKPSGSPRHLNPVRYATPEEFAKIKEVAVSLGFKAVASGPLVRSSYKAYSLYREALKNIVYLG</sequence>
<feature type="chain" id="PRO_0000102392" description="Lipoyl synthase">
    <location>
        <begin position="1"/>
        <end position="290"/>
    </location>
</feature>
<feature type="domain" description="Radical SAM core" evidence="2">
    <location>
        <begin position="44"/>
        <end position="261"/>
    </location>
</feature>
<feature type="binding site" evidence="1">
    <location>
        <position position="32"/>
    </location>
    <ligand>
        <name>[4Fe-4S] cluster</name>
        <dbReference type="ChEBI" id="CHEBI:49883"/>
        <label>1</label>
    </ligand>
</feature>
<feature type="binding site" evidence="1">
    <location>
        <position position="37"/>
    </location>
    <ligand>
        <name>[4Fe-4S] cluster</name>
        <dbReference type="ChEBI" id="CHEBI:49883"/>
        <label>1</label>
    </ligand>
</feature>
<feature type="binding site" evidence="1">
    <location>
        <position position="43"/>
    </location>
    <ligand>
        <name>[4Fe-4S] cluster</name>
        <dbReference type="ChEBI" id="CHEBI:49883"/>
        <label>1</label>
    </ligand>
</feature>
<feature type="binding site" evidence="1">
    <location>
        <position position="58"/>
    </location>
    <ligand>
        <name>[4Fe-4S] cluster</name>
        <dbReference type="ChEBI" id="CHEBI:49883"/>
        <label>2</label>
        <note>4Fe-4S-S-AdoMet</note>
    </ligand>
</feature>
<feature type="binding site" evidence="1">
    <location>
        <position position="62"/>
    </location>
    <ligand>
        <name>[4Fe-4S] cluster</name>
        <dbReference type="ChEBI" id="CHEBI:49883"/>
        <label>2</label>
        <note>4Fe-4S-S-AdoMet</note>
    </ligand>
</feature>
<feature type="binding site" evidence="1">
    <location>
        <position position="65"/>
    </location>
    <ligand>
        <name>[4Fe-4S] cluster</name>
        <dbReference type="ChEBI" id="CHEBI:49883"/>
        <label>2</label>
        <note>4Fe-4S-S-AdoMet</note>
    </ligand>
</feature>
<feature type="binding site" evidence="1">
    <location>
        <position position="272"/>
    </location>
    <ligand>
        <name>[4Fe-4S] cluster</name>
        <dbReference type="ChEBI" id="CHEBI:49883"/>
        <label>1</label>
    </ligand>
</feature>
<protein>
    <recommendedName>
        <fullName evidence="1">Lipoyl synthase</fullName>
        <ecNumber evidence="1">2.8.1.8</ecNumber>
    </recommendedName>
    <alternativeName>
        <fullName evidence="1">Lip-syn</fullName>
        <shortName evidence="1">LS</shortName>
    </alternativeName>
    <alternativeName>
        <fullName evidence="1">Lipoate synthase</fullName>
    </alternativeName>
    <alternativeName>
        <fullName evidence="1">Lipoic acid synthase</fullName>
    </alternativeName>
    <alternativeName>
        <fullName evidence="1">Sulfur insertion protein LipA</fullName>
    </alternativeName>
</protein>